<gene>
    <name evidence="2" type="primary">rpsL</name>
    <name type="ordered locus">mlr0283</name>
</gene>
<name>RS12_RHILO</name>
<protein>
    <recommendedName>
        <fullName evidence="2">Small ribosomal subunit protein uS12</fullName>
    </recommendedName>
    <alternativeName>
        <fullName evidence="3">30S ribosomal protein S12</fullName>
    </alternativeName>
</protein>
<keyword id="KW-0488">Methylation</keyword>
<keyword id="KW-0687">Ribonucleoprotein</keyword>
<keyword id="KW-0689">Ribosomal protein</keyword>
<keyword id="KW-0694">RNA-binding</keyword>
<keyword id="KW-0699">rRNA-binding</keyword>
<keyword id="KW-0820">tRNA-binding</keyword>
<evidence type="ECO:0000250" key="1"/>
<evidence type="ECO:0000255" key="2">
    <source>
        <dbReference type="HAMAP-Rule" id="MF_00403"/>
    </source>
</evidence>
<evidence type="ECO:0000305" key="3"/>
<dbReference type="EMBL" id="BA000012">
    <property type="protein sequence ID" value="BAB47901.1"/>
    <property type="molecule type" value="Genomic_DNA"/>
</dbReference>
<dbReference type="RefSeq" id="WP_006333356.1">
    <property type="nucleotide sequence ID" value="NC_002678.2"/>
</dbReference>
<dbReference type="SMR" id="Q98N61"/>
<dbReference type="GeneID" id="91561425"/>
<dbReference type="KEGG" id="mlo:mlr0283"/>
<dbReference type="eggNOG" id="COG0048">
    <property type="taxonomic scope" value="Bacteria"/>
</dbReference>
<dbReference type="HOGENOM" id="CLU_104295_1_2_5"/>
<dbReference type="Proteomes" id="UP000000552">
    <property type="component" value="Chromosome"/>
</dbReference>
<dbReference type="GO" id="GO:0015935">
    <property type="term" value="C:small ribosomal subunit"/>
    <property type="evidence" value="ECO:0007669"/>
    <property type="project" value="InterPro"/>
</dbReference>
<dbReference type="GO" id="GO:0019843">
    <property type="term" value="F:rRNA binding"/>
    <property type="evidence" value="ECO:0007669"/>
    <property type="project" value="UniProtKB-UniRule"/>
</dbReference>
<dbReference type="GO" id="GO:0003735">
    <property type="term" value="F:structural constituent of ribosome"/>
    <property type="evidence" value="ECO:0007669"/>
    <property type="project" value="InterPro"/>
</dbReference>
<dbReference type="GO" id="GO:0000049">
    <property type="term" value="F:tRNA binding"/>
    <property type="evidence" value="ECO:0007669"/>
    <property type="project" value="UniProtKB-UniRule"/>
</dbReference>
<dbReference type="GO" id="GO:0006412">
    <property type="term" value="P:translation"/>
    <property type="evidence" value="ECO:0007669"/>
    <property type="project" value="UniProtKB-UniRule"/>
</dbReference>
<dbReference type="CDD" id="cd03368">
    <property type="entry name" value="Ribosomal_S12"/>
    <property type="match status" value="1"/>
</dbReference>
<dbReference type="FunFam" id="2.40.50.140:FF:000001">
    <property type="entry name" value="30S ribosomal protein S12"/>
    <property type="match status" value="1"/>
</dbReference>
<dbReference type="Gene3D" id="2.40.50.140">
    <property type="entry name" value="Nucleic acid-binding proteins"/>
    <property type="match status" value="1"/>
</dbReference>
<dbReference type="HAMAP" id="MF_00403_B">
    <property type="entry name" value="Ribosomal_uS12_B"/>
    <property type="match status" value="1"/>
</dbReference>
<dbReference type="InterPro" id="IPR012340">
    <property type="entry name" value="NA-bd_OB-fold"/>
</dbReference>
<dbReference type="InterPro" id="IPR006032">
    <property type="entry name" value="Ribosomal_uS12"/>
</dbReference>
<dbReference type="InterPro" id="IPR005679">
    <property type="entry name" value="Ribosomal_uS12_bac"/>
</dbReference>
<dbReference type="NCBIfam" id="TIGR00981">
    <property type="entry name" value="rpsL_bact"/>
    <property type="match status" value="1"/>
</dbReference>
<dbReference type="PANTHER" id="PTHR11652">
    <property type="entry name" value="30S RIBOSOMAL PROTEIN S12 FAMILY MEMBER"/>
    <property type="match status" value="1"/>
</dbReference>
<dbReference type="Pfam" id="PF00164">
    <property type="entry name" value="Ribosom_S12_S23"/>
    <property type="match status" value="1"/>
</dbReference>
<dbReference type="PIRSF" id="PIRSF002133">
    <property type="entry name" value="Ribosomal_S12/S23"/>
    <property type="match status" value="1"/>
</dbReference>
<dbReference type="PRINTS" id="PR01034">
    <property type="entry name" value="RIBOSOMALS12"/>
</dbReference>
<dbReference type="SUPFAM" id="SSF50249">
    <property type="entry name" value="Nucleic acid-binding proteins"/>
    <property type="match status" value="1"/>
</dbReference>
<dbReference type="PROSITE" id="PS00055">
    <property type="entry name" value="RIBOSOMAL_S12"/>
    <property type="match status" value="1"/>
</dbReference>
<sequence length="123" mass="13973">MPTVNQLIRKPRIAPVKRNKVPAMQQNPQKRGVCTRVYTTTPKKPNSALRKVAKIRLTNGFEVIGYIPGEGHNLQEHSVVMIRGGRVKDLPGVRYHIIRGVLDTQGVKNRKQRRSKYGAKRPK</sequence>
<organism>
    <name type="scientific">Mesorhizobium japonicum (strain LMG 29417 / CECT 9101 / MAFF 303099)</name>
    <name type="common">Mesorhizobium loti (strain MAFF 303099)</name>
    <dbReference type="NCBI Taxonomy" id="266835"/>
    <lineage>
        <taxon>Bacteria</taxon>
        <taxon>Pseudomonadati</taxon>
        <taxon>Pseudomonadota</taxon>
        <taxon>Alphaproteobacteria</taxon>
        <taxon>Hyphomicrobiales</taxon>
        <taxon>Phyllobacteriaceae</taxon>
        <taxon>Mesorhizobium</taxon>
    </lineage>
</organism>
<accession>Q98N61</accession>
<feature type="chain" id="PRO_0000146294" description="Small ribosomal subunit protein uS12">
    <location>
        <begin position="1"/>
        <end position="123"/>
    </location>
</feature>
<feature type="modified residue" description="3-methylthioaspartic acid" evidence="1">
    <location>
        <position position="89"/>
    </location>
</feature>
<reference key="1">
    <citation type="journal article" date="2000" name="DNA Res.">
        <title>Complete genome structure of the nitrogen-fixing symbiotic bacterium Mesorhizobium loti.</title>
        <authorList>
            <person name="Kaneko T."/>
            <person name="Nakamura Y."/>
            <person name="Sato S."/>
            <person name="Asamizu E."/>
            <person name="Kato T."/>
            <person name="Sasamoto S."/>
            <person name="Watanabe A."/>
            <person name="Idesawa K."/>
            <person name="Ishikawa A."/>
            <person name="Kawashima K."/>
            <person name="Kimura T."/>
            <person name="Kishida Y."/>
            <person name="Kiyokawa C."/>
            <person name="Kohara M."/>
            <person name="Matsumoto M."/>
            <person name="Matsuno A."/>
            <person name="Mochizuki Y."/>
            <person name="Nakayama S."/>
            <person name="Nakazaki N."/>
            <person name="Shimpo S."/>
            <person name="Sugimoto M."/>
            <person name="Takeuchi C."/>
            <person name="Yamada M."/>
            <person name="Tabata S."/>
        </authorList>
    </citation>
    <scope>NUCLEOTIDE SEQUENCE [LARGE SCALE GENOMIC DNA]</scope>
    <source>
        <strain>LMG 29417 / CECT 9101 / MAFF 303099</strain>
    </source>
</reference>
<proteinExistence type="inferred from homology"/>
<comment type="function">
    <text evidence="2">With S4 and S5 plays an important role in translational accuracy.</text>
</comment>
<comment type="function">
    <text evidence="2">Interacts with and stabilizes bases of the 16S rRNA that are involved in tRNA selection in the A site and with the mRNA backbone. Located at the interface of the 30S and 50S subunits, it traverses the body of the 30S subunit contacting proteins on the other side and probably holding the rRNA structure together. The combined cluster of proteins S8, S12 and S17 appears to hold together the shoulder and platform of the 30S subunit.</text>
</comment>
<comment type="subunit">
    <text evidence="2">Part of the 30S ribosomal subunit. Contacts proteins S8 and S17. May interact with IF1 in the 30S initiation complex.</text>
</comment>
<comment type="similarity">
    <text evidence="2">Belongs to the universal ribosomal protein uS12 family.</text>
</comment>